<name>NFI_YERPE</name>
<accession>Q8ZAQ8</accession>
<accession>Q0WAS5</accession>
<accession>Q74RE7</accession>
<accession>Q8CWI0</accession>
<sequence>MFDTKALQAEQRQRASEISLHDGIDNQSVRFIAGADVGFEQHGEITRAAIAILRYPSLALVEYQVARVATSLPYIPGLLSFREYPALLAAWAQLQQRPDLILVDGQGIAHPRRLGVASHFGLLVDVPTIGVAKSRLCGDFLPLHQDVGAVQPLFDNDEQLGWVWRSKIRCNPLFISPGHRVSVGSALAWVQRCMAGYRLPEPTRWADAIASNRPQFQRWLRKNPDFLGKRRDMI</sequence>
<protein>
    <recommendedName>
        <fullName evidence="1">Endonuclease V</fullName>
        <ecNumber evidence="1">3.1.21.7</ecNumber>
    </recommendedName>
    <alternativeName>
        <fullName evidence="1">Deoxyinosine 3'endonuclease</fullName>
    </alternativeName>
    <alternativeName>
        <fullName evidence="1">Deoxyribonuclease V</fullName>
        <shortName evidence="1">DNase V</shortName>
    </alternativeName>
</protein>
<proteinExistence type="inferred from homology"/>
<feature type="chain" id="PRO_0000159681" description="Endonuclease V">
    <location>
        <begin position="1"/>
        <end position="234"/>
    </location>
</feature>
<feature type="binding site" evidence="1">
    <location>
        <position position="36"/>
    </location>
    <ligand>
        <name>Mg(2+)</name>
        <dbReference type="ChEBI" id="CHEBI:18420"/>
    </ligand>
</feature>
<feature type="binding site" evidence="1">
    <location>
        <position position="104"/>
    </location>
    <ligand>
        <name>Mg(2+)</name>
        <dbReference type="ChEBI" id="CHEBI:18420"/>
    </ligand>
</feature>
<feature type="site" description="Interaction with target DNA" evidence="1">
    <location>
        <position position="74"/>
    </location>
</feature>
<comment type="function">
    <text evidence="1">DNA repair enzyme involved in the repair of deaminated bases. Selectively cleaves double-stranded DNA at the second phosphodiester bond 3' to a deoxyinosine leaving behind the intact lesion on the nicked DNA.</text>
</comment>
<comment type="catalytic activity">
    <reaction evidence="1">
        <text>Endonucleolytic cleavage at apurinic or apyrimidinic sites to products with a 5'-phosphate.</text>
        <dbReference type="EC" id="3.1.21.7"/>
    </reaction>
</comment>
<comment type="cofactor">
    <cofactor evidence="1">
        <name>Mg(2+)</name>
        <dbReference type="ChEBI" id="CHEBI:18420"/>
    </cofactor>
</comment>
<comment type="subcellular location">
    <subcellularLocation>
        <location evidence="1">Cytoplasm</location>
    </subcellularLocation>
</comment>
<comment type="similarity">
    <text evidence="1">Belongs to the endonuclease V family.</text>
</comment>
<comment type="sequence caution" evidence="2">
    <conflict type="erroneous initiation">
        <sequence resource="EMBL-CDS" id="AAM84086"/>
    </conflict>
</comment>
<comment type="sequence caution" evidence="2">
    <conflict type="erroneous initiation">
        <sequence resource="EMBL-CDS" id="AAS63266"/>
    </conflict>
</comment>
<reference key="1">
    <citation type="journal article" date="2001" name="Nature">
        <title>Genome sequence of Yersinia pestis, the causative agent of plague.</title>
        <authorList>
            <person name="Parkhill J."/>
            <person name="Wren B.W."/>
            <person name="Thomson N.R."/>
            <person name="Titball R.W."/>
            <person name="Holden M.T.G."/>
            <person name="Prentice M.B."/>
            <person name="Sebaihia M."/>
            <person name="James K.D."/>
            <person name="Churcher C.M."/>
            <person name="Mungall K.L."/>
            <person name="Baker S."/>
            <person name="Basham D."/>
            <person name="Bentley S.D."/>
            <person name="Brooks K."/>
            <person name="Cerdeno-Tarraga A.-M."/>
            <person name="Chillingworth T."/>
            <person name="Cronin A."/>
            <person name="Davies R.M."/>
            <person name="Davis P."/>
            <person name="Dougan G."/>
            <person name="Feltwell T."/>
            <person name="Hamlin N."/>
            <person name="Holroyd S."/>
            <person name="Jagels K."/>
            <person name="Karlyshev A.V."/>
            <person name="Leather S."/>
            <person name="Moule S."/>
            <person name="Oyston P.C.F."/>
            <person name="Quail M.A."/>
            <person name="Rutherford K.M."/>
            <person name="Simmonds M."/>
            <person name="Skelton J."/>
            <person name="Stevens K."/>
            <person name="Whitehead S."/>
            <person name="Barrell B.G."/>
        </authorList>
    </citation>
    <scope>NUCLEOTIDE SEQUENCE [LARGE SCALE GENOMIC DNA]</scope>
    <source>
        <strain>CO-92 / Biovar Orientalis</strain>
    </source>
</reference>
<reference key="2">
    <citation type="journal article" date="2002" name="J. Bacteriol.">
        <title>Genome sequence of Yersinia pestis KIM.</title>
        <authorList>
            <person name="Deng W."/>
            <person name="Burland V."/>
            <person name="Plunkett G. III"/>
            <person name="Boutin A."/>
            <person name="Mayhew G.F."/>
            <person name="Liss P."/>
            <person name="Perna N.T."/>
            <person name="Rose D.J."/>
            <person name="Mau B."/>
            <person name="Zhou S."/>
            <person name="Schwartz D.C."/>
            <person name="Fetherston J.D."/>
            <person name="Lindler L.E."/>
            <person name="Brubaker R.R."/>
            <person name="Plano G.V."/>
            <person name="Straley S.C."/>
            <person name="McDonough K.A."/>
            <person name="Nilles M.L."/>
            <person name="Matson J.S."/>
            <person name="Blattner F.R."/>
            <person name="Perry R.D."/>
        </authorList>
    </citation>
    <scope>NUCLEOTIDE SEQUENCE [LARGE SCALE GENOMIC DNA]</scope>
    <source>
        <strain>KIM10+ / Biovar Mediaevalis</strain>
    </source>
</reference>
<reference key="3">
    <citation type="journal article" date="2004" name="DNA Res.">
        <title>Complete genome sequence of Yersinia pestis strain 91001, an isolate avirulent to humans.</title>
        <authorList>
            <person name="Song Y."/>
            <person name="Tong Z."/>
            <person name="Wang J."/>
            <person name="Wang L."/>
            <person name="Guo Z."/>
            <person name="Han Y."/>
            <person name="Zhang J."/>
            <person name="Pei D."/>
            <person name="Zhou D."/>
            <person name="Qin H."/>
            <person name="Pang X."/>
            <person name="Han Y."/>
            <person name="Zhai J."/>
            <person name="Li M."/>
            <person name="Cui B."/>
            <person name="Qi Z."/>
            <person name="Jin L."/>
            <person name="Dai R."/>
            <person name="Chen F."/>
            <person name="Li S."/>
            <person name="Ye C."/>
            <person name="Du Z."/>
            <person name="Lin W."/>
            <person name="Wang J."/>
            <person name="Yu J."/>
            <person name="Yang H."/>
            <person name="Wang J."/>
            <person name="Huang P."/>
            <person name="Yang R."/>
        </authorList>
    </citation>
    <scope>NUCLEOTIDE SEQUENCE [LARGE SCALE GENOMIC DNA]</scope>
    <source>
        <strain>91001 / Biovar Mediaevalis</strain>
    </source>
</reference>
<dbReference type="EC" id="3.1.21.7" evidence="1"/>
<dbReference type="EMBL" id="AL590842">
    <property type="protein sequence ID" value="CAL22320.1"/>
    <property type="molecule type" value="Genomic_DNA"/>
</dbReference>
<dbReference type="EMBL" id="AE009952">
    <property type="protein sequence ID" value="AAM84086.1"/>
    <property type="status" value="ALT_INIT"/>
    <property type="molecule type" value="Genomic_DNA"/>
</dbReference>
<dbReference type="EMBL" id="AE017042">
    <property type="protein sequence ID" value="AAS63266.1"/>
    <property type="status" value="ALT_INIT"/>
    <property type="molecule type" value="Genomic_DNA"/>
</dbReference>
<dbReference type="PIR" id="AE0454">
    <property type="entry name" value="AE0454"/>
</dbReference>
<dbReference type="RefSeq" id="WP_002217884.1">
    <property type="nucleotide sequence ID" value="NZ_WUCM01000097.1"/>
</dbReference>
<dbReference type="RefSeq" id="YP_002348613.1">
    <property type="nucleotide sequence ID" value="NC_003143.1"/>
</dbReference>
<dbReference type="SMR" id="Q8ZAQ8"/>
<dbReference type="STRING" id="214092.YPO3733"/>
<dbReference type="PaxDb" id="214092-YPO3733"/>
<dbReference type="EnsemblBacteria" id="AAS63266">
    <property type="protein sequence ID" value="AAS63266"/>
    <property type="gene ID" value="YP_3096"/>
</dbReference>
<dbReference type="GeneID" id="57974984"/>
<dbReference type="KEGG" id="ype:YPO3733"/>
<dbReference type="KEGG" id="ypj:CH55_3293"/>
<dbReference type="KEGG" id="ypk:y0497"/>
<dbReference type="KEGG" id="ypl:CH46_1343"/>
<dbReference type="KEGG" id="ypm:YP_3096"/>
<dbReference type="KEGG" id="ypv:BZ15_3992"/>
<dbReference type="KEGG" id="ypw:CH59_1657"/>
<dbReference type="PATRIC" id="fig|214092.21.peg.4251"/>
<dbReference type="eggNOG" id="COG1515">
    <property type="taxonomic scope" value="Bacteria"/>
</dbReference>
<dbReference type="HOGENOM" id="CLU_047631_1_0_6"/>
<dbReference type="OMA" id="NACAHTL"/>
<dbReference type="Proteomes" id="UP000000815">
    <property type="component" value="Chromosome"/>
</dbReference>
<dbReference type="Proteomes" id="UP000001019">
    <property type="component" value="Chromosome"/>
</dbReference>
<dbReference type="Proteomes" id="UP000002490">
    <property type="component" value="Chromosome"/>
</dbReference>
<dbReference type="GO" id="GO:0005737">
    <property type="term" value="C:cytoplasm"/>
    <property type="evidence" value="ECO:0007669"/>
    <property type="project" value="UniProtKB-SubCell"/>
</dbReference>
<dbReference type="GO" id="GO:0043737">
    <property type="term" value="F:deoxyribonuclease V activity"/>
    <property type="evidence" value="ECO:0000318"/>
    <property type="project" value="GO_Central"/>
</dbReference>
<dbReference type="GO" id="GO:0000287">
    <property type="term" value="F:magnesium ion binding"/>
    <property type="evidence" value="ECO:0007669"/>
    <property type="project" value="UniProtKB-UniRule"/>
</dbReference>
<dbReference type="GO" id="GO:0016891">
    <property type="term" value="F:RNA endonuclease activity, producing 5'-phosphomonoesters"/>
    <property type="evidence" value="ECO:0000318"/>
    <property type="project" value="GO_Central"/>
</dbReference>
<dbReference type="GO" id="GO:0003727">
    <property type="term" value="F:single-stranded RNA binding"/>
    <property type="evidence" value="ECO:0000318"/>
    <property type="project" value="GO_Central"/>
</dbReference>
<dbReference type="GO" id="GO:0006281">
    <property type="term" value="P:DNA repair"/>
    <property type="evidence" value="ECO:0007669"/>
    <property type="project" value="UniProtKB-UniRule"/>
</dbReference>
<dbReference type="CDD" id="cd06559">
    <property type="entry name" value="Endonuclease_V"/>
    <property type="match status" value="1"/>
</dbReference>
<dbReference type="FunFam" id="3.30.2170.10:FF:000001">
    <property type="entry name" value="Endonuclease V"/>
    <property type="match status" value="1"/>
</dbReference>
<dbReference type="Gene3D" id="3.30.2170.10">
    <property type="entry name" value="archaeoglobus fulgidus dsm 4304 superfamily"/>
    <property type="match status" value="1"/>
</dbReference>
<dbReference type="HAMAP" id="MF_00801">
    <property type="entry name" value="Endonuclease_5"/>
    <property type="match status" value="1"/>
</dbReference>
<dbReference type="InterPro" id="IPR007581">
    <property type="entry name" value="Endonuclease-V"/>
</dbReference>
<dbReference type="NCBIfam" id="NF008629">
    <property type="entry name" value="PRK11617.1"/>
    <property type="match status" value="1"/>
</dbReference>
<dbReference type="PANTHER" id="PTHR28511">
    <property type="entry name" value="ENDONUCLEASE V"/>
    <property type="match status" value="1"/>
</dbReference>
<dbReference type="PANTHER" id="PTHR28511:SF1">
    <property type="entry name" value="ENDONUCLEASE V"/>
    <property type="match status" value="1"/>
</dbReference>
<dbReference type="Pfam" id="PF04493">
    <property type="entry name" value="Endonuclease_5"/>
    <property type="match status" value="1"/>
</dbReference>
<gene>
    <name evidence="1" type="primary">nfi</name>
    <name type="ordered locus">YPO3733</name>
    <name type="ordered locus">y0497</name>
    <name type="ordered locus">YP_3096</name>
</gene>
<keyword id="KW-0963">Cytoplasm</keyword>
<keyword id="KW-0227">DNA damage</keyword>
<keyword id="KW-0234">DNA repair</keyword>
<keyword id="KW-0255">Endonuclease</keyword>
<keyword id="KW-0378">Hydrolase</keyword>
<keyword id="KW-0460">Magnesium</keyword>
<keyword id="KW-0479">Metal-binding</keyword>
<keyword id="KW-0540">Nuclease</keyword>
<keyword id="KW-1185">Reference proteome</keyword>
<organism>
    <name type="scientific">Yersinia pestis</name>
    <dbReference type="NCBI Taxonomy" id="632"/>
    <lineage>
        <taxon>Bacteria</taxon>
        <taxon>Pseudomonadati</taxon>
        <taxon>Pseudomonadota</taxon>
        <taxon>Gammaproteobacteria</taxon>
        <taxon>Enterobacterales</taxon>
        <taxon>Yersiniaceae</taxon>
        <taxon>Yersinia</taxon>
    </lineage>
</organism>
<evidence type="ECO:0000255" key="1">
    <source>
        <dbReference type="HAMAP-Rule" id="MF_00801"/>
    </source>
</evidence>
<evidence type="ECO:0000305" key="2"/>